<reference key="1">
    <citation type="journal article" date="1995" name="J. Bacteriol.">
        <title>Genetic analysis of the dTDP-rhamnose biosynthesis region of the Escherichia coli VW187 (O7:K1) rfb gene cluster: identification of functional homologs of rfbB and rfbA in the rff cluster and correct location of the rffE gene.</title>
        <authorList>
            <person name="Marolda C.L."/>
            <person name="Valvano M.A."/>
        </authorList>
    </citation>
    <scope>NUCLEOTIDE SEQUENCE [GENOMIC DNA]</scope>
    <scope>FUNCTION</scope>
    <scope>CATALYTIC ACTIVITY</scope>
    <scope>PATHWAY</scope>
    <source>
        <strain>O7:K1 / VW187</strain>
    </source>
</reference>
<feature type="chain" id="PRO_0000207993" description="Glucose-1-phosphate thymidylyltransferase">
    <location>
        <begin position="1"/>
        <end position="293"/>
    </location>
</feature>
<feature type="binding site" evidence="1">
    <location>
        <position position="111"/>
    </location>
    <ligand>
        <name>Mg(2+)</name>
        <dbReference type="ChEBI" id="CHEBI:18420"/>
    </ligand>
</feature>
<feature type="binding site" evidence="1">
    <location>
        <position position="227"/>
    </location>
    <ligand>
        <name>Mg(2+)</name>
        <dbReference type="ChEBI" id="CHEBI:18420"/>
    </ligand>
</feature>
<gene>
    <name type="primary">rmlA</name>
    <name evidence="3" type="synonym">rfbA</name>
</gene>
<accession>P55253</accession>
<evidence type="ECO:0000250" key="1">
    <source>
        <dbReference type="UniProtKB" id="P61887"/>
    </source>
</evidence>
<evidence type="ECO:0000269" key="2">
    <source>
    </source>
</evidence>
<evidence type="ECO:0000303" key="3">
    <source>
    </source>
</evidence>
<evidence type="ECO:0000305" key="4"/>
<evidence type="ECO:0000305" key="5">
    <source>
    </source>
</evidence>
<protein>
    <recommendedName>
        <fullName evidence="3">Glucose-1-phosphate thymidylyltransferase</fullName>
        <ecNumber evidence="2">2.7.7.24</ecNumber>
    </recommendedName>
    <alternativeName>
        <fullName>dTDP-glucose pyrophosphorylase</fullName>
    </alternativeName>
    <alternativeName>
        <fullName>dTDP-glucose synthase</fullName>
    </alternativeName>
</protein>
<keyword id="KW-0448">Lipopolysaccharide biosynthesis</keyword>
<keyword id="KW-0460">Magnesium</keyword>
<keyword id="KW-0479">Metal-binding</keyword>
<keyword id="KW-0548">Nucleotidyltransferase</keyword>
<keyword id="KW-0808">Transferase</keyword>
<comment type="function">
    <text evidence="2">Catalyzes the formation of dTDP-glucose, from dTTP and glucose 1-phosphate, as well as its pyrophosphorolysis.</text>
</comment>
<comment type="catalytic activity">
    <reaction evidence="2">
        <text>dTTP + alpha-D-glucose 1-phosphate + H(+) = dTDP-alpha-D-glucose + diphosphate</text>
        <dbReference type="Rhea" id="RHEA:15225"/>
        <dbReference type="ChEBI" id="CHEBI:15378"/>
        <dbReference type="ChEBI" id="CHEBI:33019"/>
        <dbReference type="ChEBI" id="CHEBI:37568"/>
        <dbReference type="ChEBI" id="CHEBI:57477"/>
        <dbReference type="ChEBI" id="CHEBI:58601"/>
        <dbReference type="EC" id="2.7.7.24"/>
    </reaction>
</comment>
<comment type="cofactor">
    <cofactor evidence="1">
        <name>Mg(2+)</name>
        <dbReference type="ChEBI" id="CHEBI:18420"/>
    </cofactor>
    <text evidence="1">Binds 1 Mg(2+) ion per subunit.</text>
</comment>
<comment type="pathway">
    <text evidence="1">Carbohydrate biosynthesis; dTDP-L-rhamnose biosynthesis.</text>
</comment>
<comment type="pathway">
    <text evidence="5">Bacterial outer membrane biogenesis; LPS O-antigen biosynthesis.</text>
</comment>
<comment type="subunit">
    <text evidence="1">Homotetramer.</text>
</comment>
<comment type="similarity">
    <text evidence="4">Belongs to the glucose-1-phosphate thymidylyltransferase family.</text>
</comment>
<name>RMLA3_ECOLX</name>
<organism>
    <name type="scientific">Escherichia coli</name>
    <dbReference type="NCBI Taxonomy" id="562"/>
    <lineage>
        <taxon>Bacteria</taxon>
        <taxon>Pseudomonadati</taxon>
        <taxon>Pseudomonadota</taxon>
        <taxon>Gammaproteobacteria</taxon>
        <taxon>Enterobacterales</taxon>
        <taxon>Enterobacteriaceae</taxon>
        <taxon>Escherichia</taxon>
    </lineage>
</organism>
<dbReference type="EC" id="2.7.7.24" evidence="2"/>
<dbReference type="EMBL" id="AF125322">
    <property type="protein sequence ID" value="AAC63614.1"/>
    <property type="molecule type" value="Genomic_DNA"/>
</dbReference>
<dbReference type="PIR" id="S78544">
    <property type="entry name" value="S78544"/>
</dbReference>
<dbReference type="SMR" id="P55253"/>
<dbReference type="eggNOG" id="COG1209">
    <property type="taxonomic scope" value="Bacteria"/>
</dbReference>
<dbReference type="UniPathway" id="UPA00124"/>
<dbReference type="UniPathway" id="UPA00281"/>
<dbReference type="GO" id="GO:0008879">
    <property type="term" value="F:glucose-1-phosphate thymidylyltransferase activity"/>
    <property type="evidence" value="ECO:0000314"/>
    <property type="project" value="UniProtKB"/>
</dbReference>
<dbReference type="GO" id="GO:0000287">
    <property type="term" value="F:magnesium ion binding"/>
    <property type="evidence" value="ECO:0000250"/>
    <property type="project" value="UniProtKB"/>
</dbReference>
<dbReference type="GO" id="GO:0019305">
    <property type="term" value="P:dTDP-rhamnose biosynthetic process"/>
    <property type="evidence" value="ECO:0007669"/>
    <property type="project" value="UniProtKB-UniPathway"/>
</dbReference>
<dbReference type="GO" id="GO:0009243">
    <property type="term" value="P:O antigen biosynthetic process"/>
    <property type="evidence" value="ECO:0007669"/>
    <property type="project" value="UniProtKB-UniPathway"/>
</dbReference>
<dbReference type="GO" id="GO:0000271">
    <property type="term" value="P:polysaccharide biosynthetic process"/>
    <property type="evidence" value="ECO:0000314"/>
    <property type="project" value="UniProtKB"/>
</dbReference>
<dbReference type="CDD" id="cd02538">
    <property type="entry name" value="G1P_TT_short"/>
    <property type="match status" value="1"/>
</dbReference>
<dbReference type="FunFam" id="3.90.550.10:FF:000023">
    <property type="entry name" value="Glucose-1-phosphate thymidylyltransferase"/>
    <property type="match status" value="1"/>
</dbReference>
<dbReference type="Gene3D" id="3.90.550.10">
    <property type="entry name" value="Spore Coat Polysaccharide Biosynthesis Protein SpsA, Chain A"/>
    <property type="match status" value="1"/>
</dbReference>
<dbReference type="InterPro" id="IPR005907">
    <property type="entry name" value="G1P_thy_trans_s"/>
</dbReference>
<dbReference type="InterPro" id="IPR005835">
    <property type="entry name" value="NTP_transferase_dom"/>
</dbReference>
<dbReference type="InterPro" id="IPR029044">
    <property type="entry name" value="Nucleotide-diphossugar_trans"/>
</dbReference>
<dbReference type="NCBIfam" id="NF012024">
    <property type="entry name" value="PRK15480.1"/>
    <property type="match status" value="1"/>
</dbReference>
<dbReference type="NCBIfam" id="TIGR01207">
    <property type="entry name" value="rmlA"/>
    <property type="match status" value="1"/>
</dbReference>
<dbReference type="PANTHER" id="PTHR43532">
    <property type="entry name" value="GLUCOSE-1-PHOSPHATE THYMIDYLYLTRANSFERASE"/>
    <property type="match status" value="1"/>
</dbReference>
<dbReference type="PANTHER" id="PTHR43532:SF1">
    <property type="entry name" value="GLUCOSE-1-PHOSPHATE THYMIDYLYLTRANSFERASE 1"/>
    <property type="match status" value="1"/>
</dbReference>
<dbReference type="Pfam" id="PF00483">
    <property type="entry name" value="NTP_transferase"/>
    <property type="match status" value="1"/>
</dbReference>
<dbReference type="SUPFAM" id="SSF53448">
    <property type="entry name" value="Nucleotide-diphospho-sugar transferases"/>
    <property type="match status" value="1"/>
</dbReference>
<sequence>MKTRKGIILAGGSGTRLYPVTMAVSKQLLPIYDKPMIYYPLSTLMLAGIRDILIISTPQDTPRFQQLLGDGSQWGLNLQYKVQPSPDGLAQAFIIGEDFIGGDDCALVLGDNIFYGHDLPKLMEAAVNKESGATVFAYHVNDPERYGVVEFDNNGTAISLEEKPLEPKSNYAVTGLYFYDNDVVEMARKNLKPSARGELEITDINRIYMEQGRLSVAMMGRGYAWLDTGTHQSLIEASNFIATIEERQGLKVSCPEEIAYRKGFIDAEQVKVLAEPLKKNAYGQYLLKMIKGY</sequence>
<proteinExistence type="evidence at protein level"/>